<dbReference type="EC" id="2.1.3.3"/>
<dbReference type="EMBL" id="X99978">
    <property type="protein sequence ID" value="CAA68243.1"/>
    <property type="molecule type" value="Genomic_DNA"/>
</dbReference>
<dbReference type="EMBL" id="AL935263">
    <property type="protein sequence ID" value="CCC78022.1"/>
    <property type="molecule type" value="Genomic_DNA"/>
</dbReference>
<dbReference type="RefSeq" id="WP_011101046.1">
    <property type="nucleotide sequence ID" value="NC_004567.2"/>
</dbReference>
<dbReference type="RefSeq" id="YP_004888536.1">
    <property type="nucleotide sequence ID" value="NC_004567.2"/>
</dbReference>
<dbReference type="SMR" id="O08322"/>
<dbReference type="STRING" id="220668.lp_0532"/>
<dbReference type="EnsemblBacteria" id="CCC78022">
    <property type="protein sequence ID" value="CCC78022"/>
    <property type="gene ID" value="lp_0532"/>
</dbReference>
<dbReference type="KEGG" id="lpl:lp_0532"/>
<dbReference type="PATRIC" id="fig|220668.9.peg.440"/>
<dbReference type="eggNOG" id="COG0078">
    <property type="taxonomic scope" value="Bacteria"/>
</dbReference>
<dbReference type="HOGENOM" id="CLU_043846_3_1_9"/>
<dbReference type="OrthoDB" id="9802587at2"/>
<dbReference type="PhylomeDB" id="O08322"/>
<dbReference type="UniPathway" id="UPA00068">
    <property type="reaction ID" value="UER00112"/>
</dbReference>
<dbReference type="Proteomes" id="UP000000432">
    <property type="component" value="Chromosome"/>
</dbReference>
<dbReference type="GO" id="GO:0005737">
    <property type="term" value="C:cytoplasm"/>
    <property type="evidence" value="ECO:0007669"/>
    <property type="project" value="UniProtKB-SubCell"/>
</dbReference>
<dbReference type="GO" id="GO:0016597">
    <property type="term" value="F:amino acid binding"/>
    <property type="evidence" value="ECO:0007669"/>
    <property type="project" value="InterPro"/>
</dbReference>
<dbReference type="GO" id="GO:0004585">
    <property type="term" value="F:ornithine carbamoyltransferase activity"/>
    <property type="evidence" value="ECO:0007669"/>
    <property type="project" value="UniProtKB-UniRule"/>
</dbReference>
<dbReference type="GO" id="GO:0042450">
    <property type="term" value="P:arginine biosynthetic process via ornithine"/>
    <property type="evidence" value="ECO:0007669"/>
    <property type="project" value="TreeGrafter"/>
</dbReference>
<dbReference type="GO" id="GO:0019240">
    <property type="term" value="P:citrulline biosynthetic process"/>
    <property type="evidence" value="ECO:0007669"/>
    <property type="project" value="TreeGrafter"/>
</dbReference>
<dbReference type="GO" id="GO:0006526">
    <property type="term" value="P:L-arginine biosynthetic process"/>
    <property type="evidence" value="ECO:0007669"/>
    <property type="project" value="UniProtKB-UniRule"/>
</dbReference>
<dbReference type="FunFam" id="3.40.50.1370:FF:000008">
    <property type="entry name" value="Ornithine carbamoyltransferase"/>
    <property type="match status" value="1"/>
</dbReference>
<dbReference type="Gene3D" id="3.40.50.1370">
    <property type="entry name" value="Aspartate/ornithine carbamoyltransferase"/>
    <property type="match status" value="2"/>
</dbReference>
<dbReference type="HAMAP" id="MF_01109">
    <property type="entry name" value="OTCase"/>
    <property type="match status" value="1"/>
</dbReference>
<dbReference type="InterPro" id="IPR006132">
    <property type="entry name" value="Asp/Orn_carbamoyltranf_P-bd"/>
</dbReference>
<dbReference type="InterPro" id="IPR006130">
    <property type="entry name" value="Asp/Orn_carbamoylTrfase"/>
</dbReference>
<dbReference type="InterPro" id="IPR036901">
    <property type="entry name" value="Asp/Orn_carbamoylTrfase_sf"/>
</dbReference>
<dbReference type="InterPro" id="IPR006131">
    <property type="entry name" value="Asp_carbamoyltransf_Asp/Orn-bd"/>
</dbReference>
<dbReference type="InterPro" id="IPR002292">
    <property type="entry name" value="Orn/put_carbamltrans"/>
</dbReference>
<dbReference type="InterPro" id="IPR024904">
    <property type="entry name" value="OTCase_ArgI"/>
</dbReference>
<dbReference type="NCBIfam" id="TIGR00658">
    <property type="entry name" value="orni_carb_tr"/>
    <property type="match status" value="1"/>
</dbReference>
<dbReference type="NCBIfam" id="NF001986">
    <property type="entry name" value="PRK00779.1"/>
    <property type="match status" value="1"/>
</dbReference>
<dbReference type="PANTHER" id="PTHR45753:SF1">
    <property type="entry name" value="ORNITHINE CARBAMOYLTRANSFERASE, CATABOLIC"/>
    <property type="match status" value="1"/>
</dbReference>
<dbReference type="PANTHER" id="PTHR45753">
    <property type="entry name" value="ORNITHINE CARBAMOYLTRANSFERASE, MITOCHONDRIAL"/>
    <property type="match status" value="1"/>
</dbReference>
<dbReference type="Pfam" id="PF00185">
    <property type="entry name" value="OTCace"/>
    <property type="match status" value="1"/>
</dbReference>
<dbReference type="Pfam" id="PF02729">
    <property type="entry name" value="OTCace_N"/>
    <property type="match status" value="1"/>
</dbReference>
<dbReference type="PRINTS" id="PR00100">
    <property type="entry name" value="AOTCASE"/>
</dbReference>
<dbReference type="PRINTS" id="PR00102">
    <property type="entry name" value="OTCASE"/>
</dbReference>
<dbReference type="SUPFAM" id="SSF53671">
    <property type="entry name" value="Aspartate/ornithine carbamoyltransferase"/>
    <property type="match status" value="1"/>
</dbReference>
<dbReference type="PROSITE" id="PS00097">
    <property type="entry name" value="CARBAMOYLTRANSFERASE"/>
    <property type="match status" value="1"/>
</dbReference>
<evidence type="ECO:0000250" key="1"/>
<evidence type="ECO:0000255" key="2">
    <source>
        <dbReference type="HAMAP-Rule" id="MF_01109"/>
    </source>
</evidence>
<evidence type="ECO:0000305" key="3"/>
<organism>
    <name type="scientific">Lactiplantibacillus plantarum (strain ATCC BAA-793 / NCIMB 8826 / WCFS1)</name>
    <name type="common">Lactobacillus plantarum</name>
    <dbReference type="NCBI Taxonomy" id="220668"/>
    <lineage>
        <taxon>Bacteria</taxon>
        <taxon>Bacillati</taxon>
        <taxon>Bacillota</taxon>
        <taxon>Bacilli</taxon>
        <taxon>Lactobacillales</taxon>
        <taxon>Lactobacillaceae</taxon>
        <taxon>Lactiplantibacillus</taxon>
    </lineage>
</organism>
<gene>
    <name type="primary">argF</name>
    <name type="ordered locus">lp_0532</name>
</gene>
<accession>O08322</accession>
<accession>F9UL07</accession>
<comment type="function">
    <text evidence="1">Reversibly catalyzes the transfer of the carbamoyl group from carbamoyl phosphate (CP) to the N(epsilon) atom of ornithine (ORN) to produce L-citrulline.</text>
</comment>
<comment type="catalytic activity">
    <reaction>
        <text>carbamoyl phosphate + L-ornithine = L-citrulline + phosphate + H(+)</text>
        <dbReference type="Rhea" id="RHEA:19513"/>
        <dbReference type="ChEBI" id="CHEBI:15378"/>
        <dbReference type="ChEBI" id="CHEBI:43474"/>
        <dbReference type="ChEBI" id="CHEBI:46911"/>
        <dbReference type="ChEBI" id="CHEBI:57743"/>
        <dbReference type="ChEBI" id="CHEBI:58228"/>
        <dbReference type="EC" id="2.1.3.3"/>
    </reaction>
</comment>
<comment type="pathway">
    <text>Amino-acid biosynthesis; L-arginine biosynthesis; L-arginine from L-ornithine and carbamoyl phosphate: step 1/3.</text>
</comment>
<comment type="subcellular location">
    <subcellularLocation>
        <location evidence="1">Cytoplasm</location>
    </subcellularLocation>
</comment>
<comment type="similarity">
    <text evidence="3">Belongs to the aspartate/ornithine carbamoyltransferase superfamily. OTCase family.</text>
</comment>
<proteinExistence type="inferred from homology"/>
<sequence>MNNQFEGRSFLKEIDYTPTELAYLIDFASHLKTLKAHHIPHPYLQGKNIALLFEKTSTRTRSAFTVAANDLGANPEFLCKDDIQFGTKESVVDTAKVLGSMYDGIEFRGFKQSTVEDLATYSGVPVWNGLTDEWHPTQILADFLTLKEHFGHLKGLTLAYVGDGRNNMANSLLVAGAMLGINIAIGSPVALQPAPAVVALAQQYAQAAGSTVVITADPQQAVTQADALYTDVWVSMGEQVDYGERIKQLLPFQINTALLAATGKSSTIVMHCLPALHDLKTQLGAKLGEQYGMTAFEITDDVFQSKQEVVFEEAGNRMPAIKAVMAATLGNLFIPTSIFN</sequence>
<protein>
    <recommendedName>
        <fullName>Ornithine carbamoyltransferase</fullName>
        <shortName>OTCase</shortName>
        <ecNumber>2.1.3.3</ecNumber>
    </recommendedName>
</protein>
<reference key="1">
    <citation type="journal article" date="1997" name="J. Bacteriol.">
        <title>Arginine biosynthesis and regulation in Lactobacillus plantarum: the carA gene and the argCJBDF cluster are divergently transcribed.</title>
        <authorList>
            <person name="Bringel F."/>
            <person name="Frey L."/>
            <person name="Boivin S."/>
            <person name="Hubert J.-C."/>
        </authorList>
    </citation>
    <scope>NUCLEOTIDE SEQUENCE [GENOMIC DNA]</scope>
    <source>
        <strain>ATCC 8014 / CCM 1904 / DSM 20205 / NCDO 82 / NCIB 6376</strain>
    </source>
</reference>
<reference key="2">
    <citation type="journal article" date="2003" name="Proc. Natl. Acad. Sci. U.S.A.">
        <title>Complete genome sequence of Lactobacillus plantarum WCFS1.</title>
        <authorList>
            <person name="Kleerebezem M."/>
            <person name="Boekhorst J."/>
            <person name="van Kranenburg R."/>
            <person name="Molenaar D."/>
            <person name="Kuipers O.P."/>
            <person name="Leer R."/>
            <person name="Tarchini R."/>
            <person name="Peters S.A."/>
            <person name="Sandbrink H.M."/>
            <person name="Fiers M.W.E.J."/>
            <person name="Stiekema W."/>
            <person name="Klein Lankhorst R.M."/>
            <person name="Bron P.A."/>
            <person name="Hoffer S.M."/>
            <person name="Nierop Groot M.N."/>
            <person name="Kerkhoven R."/>
            <person name="De Vries M."/>
            <person name="Ursing B."/>
            <person name="De Vos W.M."/>
            <person name="Siezen R.J."/>
        </authorList>
    </citation>
    <scope>NUCLEOTIDE SEQUENCE [LARGE SCALE GENOMIC DNA]</scope>
    <source>
        <strain>ATCC BAA-793 / NCIMB 8826 / WCFS1</strain>
    </source>
</reference>
<reference key="3">
    <citation type="journal article" date="2012" name="J. Bacteriol.">
        <title>Complete resequencing and reannotation of the Lactobacillus plantarum WCFS1 genome.</title>
        <authorList>
            <person name="Siezen R.J."/>
            <person name="Francke C."/>
            <person name="Renckens B."/>
            <person name="Boekhorst J."/>
            <person name="Wels M."/>
            <person name="Kleerebezem M."/>
            <person name="van Hijum S.A."/>
        </authorList>
    </citation>
    <scope>NUCLEOTIDE SEQUENCE [LARGE SCALE GENOMIC DNA]</scope>
    <scope>GENOME REANNOTATION</scope>
    <source>
        <strain>ATCC BAA-793 / NCIMB 8826 / WCFS1</strain>
    </source>
</reference>
<keyword id="KW-0028">Amino-acid biosynthesis</keyword>
<keyword id="KW-0055">Arginine biosynthesis</keyword>
<keyword id="KW-0963">Cytoplasm</keyword>
<keyword id="KW-1185">Reference proteome</keyword>
<keyword id="KW-0808">Transferase</keyword>
<name>OTC_LACPL</name>
<feature type="chain" id="PRO_0000112937" description="Ornithine carbamoyltransferase">
    <location>
        <begin position="1"/>
        <end position="340"/>
    </location>
</feature>
<feature type="binding site" evidence="2">
    <location>
        <begin position="57"/>
        <end position="60"/>
    </location>
    <ligand>
        <name>carbamoyl phosphate</name>
        <dbReference type="ChEBI" id="CHEBI:58228"/>
    </ligand>
</feature>
<feature type="binding site" evidence="2">
    <location>
        <position position="84"/>
    </location>
    <ligand>
        <name>carbamoyl phosphate</name>
        <dbReference type="ChEBI" id="CHEBI:58228"/>
    </ligand>
</feature>
<feature type="binding site" evidence="2">
    <location>
        <position position="108"/>
    </location>
    <ligand>
        <name>carbamoyl phosphate</name>
        <dbReference type="ChEBI" id="CHEBI:58228"/>
    </ligand>
</feature>
<feature type="binding site" evidence="2">
    <location>
        <begin position="135"/>
        <end position="138"/>
    </location>
    <ligand>
        <name>carbamoyl phosphate</name>
        <dbReference type="ChEBI" id="CHEBI:58228"/>
    </ligand>
</feature>
<feature type="binding site" evidence="2">
    <location>
        <position position="167"/>
    </location>
    <ligand>
        <name>L-ornithine</name>
        <dbReference type="ChEBI" id="CHEBI:46911"/>
    </ligand>
</feature>
<feature type="binding site" evidence="2">
    <location>
        <position position="231"/>
    </location>
    <ligand>
        <name>L-ornithine</name>
        <dbReference type="ChEBI" id="CHEBI:46911"/>
    </ligand>
</feature>
<feature type="binding site" evidence="2">
    <location>
        <begin position="235"/>
        <end position="236"/>
    </location>
    <ligand>
        <name>L-ornithine</name>
        <dbReference type="ChEBI" id="CHEBI:46911"/>
    </ligand>
</feature>
<feature type="binding site" evidence="2">
    <location>
        <begin position="272"/>
        <end position="273"/>
    </location>
    <ligand>
        <name>carbamoyl phosphate</name>
        <dbReference type="ChEBI" id="CHEBI:58228"/>
    </ligand>
</feature>
<feature type="binding site" evidence="2">
    <location>
        <position position="317"/>
    </location>
    <ligand>
        <name>carbamoyl phosphate</name>
        <dbReference type="ChEBI" id="CHEBI:58228"/>
    </ligand>
</feature>
<feature type="sequence conflict" description="In Ref. 1; CAA68243." evidence="3" ref="1">
    <original>C</original>
    <variation>G</variation>
    <location>
        <position position="79"/>
    </location>
</feature>
<feature type="sequence conflict" description="In Ref. 1; CAA68243." evidence="3" ref="1">
    <original>S</original>
    <variation>A</variation>
    <location>
        <position position="187"/>
    </location>
</feature>
<feature type="sequence conflict" description="In Ref. 1; CAA68243." evidence="3" ref="1">
    <original>A</original>
    <variation>T</variation>
    <location>
        <position position="257"/>
    </location>
</feature>
<feature type="sequence conflict" description="In Ref. 1; CAA68243." evidence="3" ref="1">
    <original>E</original>
    <variation>A</variation>
    <location>
        <position position="308"/>
    </location>
</feature>